<geneLocation type="plasmid">
    <name>pCD1</name>
</geneLocation>
<evidence type="ECO:0000305" key="1"/>
<name>LCRS_YERPE</name>
<reference key="1">
    <citation type="journal article" date="1998" name="Infect. Immun.">
        <title>DNA sequencing and analysis of the low-Ca2+-response plasmid pCD1 of Yersinia pestis KIM5.</title>
        <authorList>
            <person name="Perry R.D."/>
            <person name="Straley S.C."/>
            <person name="Fetherston J.D."/>
            <person name="Rose D.J."/>
            <person name="Gregor J."/>
            <person name="Blattner F.R."/>
        </authorList>
    </citation>
    <scope>NUCLEOTIDE SEQUENCE [GENOMIC DNA]</scope>
    <source>
        <strain>KIM5 / Biovar Mediaevalis</strain>
    </source>
</reference>
<reference key="2">
    <citation type="journal article" date="1998" name="J. Bacteriol.">
        <title>Structural organization of virulence-associated plasmids of Yersinia pestis.</title>
        <authorList>
            <person name="Hu P."/>
            <person name="Elliott J."/>
            <person name="McCready P."/>
            <person name="Skowronski E."/>
            <person name="Garnes J."/>
            <person name="Kobayashi A."/>
            <person name="Brubaker R.R."/>
            <person name="Garcia E."/>
        </authorList>
    </citation>
    <scope>NUCLEOTIDE SEQUENCE [GENOMIC DNA]</scope>
    <source>
        <strain>KIM5 / Biovar Mediaevalis</strain>
    </source>
</reference>
<reference key="3">
    <citation type="journal article" date="2001" name="Nature">
        <title>Genome sequence of Yersinia pestis, the causative agent of plague.</title>
        <authorList>
            <person name="Parkhill J."/>
            <person name="Wren B.W."/>
            <person name="Thomson N.R."/>
            <person name="Titball R.W."/>
            <person name="Holden M.T.G."/>
            <person name="Prentice M.B."/>
            <person name="Sebaihia M."/>
            <person name="James K.D."/>
            <person name="Churcher C.M."/>
            <person name="Mungall K.L."/>
            <person name="Baker S."/>
            <person name="Basham D."/>
            <person name="Bentley S.D."/>
            <person name="Brooks K."/>
            <person name="Cerdeno-Tarraga A.-M."/>
            <person name="Chillingworth T."/>
            <person name="Cronin A."/>
            <person name="Davies R.M."/>
            <person name="Davis P."/>
            <person name="Dougan G."/>
            <person name="Feltwell T."/>
            <person name="Hamlin N."/>
            <person name="Holroyd S."/>
            <person name="Jagels K."/>
            <person name="Karlyshev A.V."/>
            <person name="Leather S."/>
            <person name="Moule S."/>
            <person name="Oyston P.C.F."/>
            <person name="Quail M.A."/>
            <person name="Rutherford K.M."/>
            <person name="Simmonds M."/>
            <person name="Skelton J."/>
            <person name="Stevens K."/>
            <person name="Whitehead S."/>
            <person name="Barrell B.G."/>
        </authorList>
    </citation>
    <scope>NUCLEOTIDE SEQUENCE [LARGE SCALE GENOMIC DNA]</scope>
    <source>
        <strain>CO-92 / Biovar Orientalis</strain>
    </source>
</reference>
<reference key="4">
    <citation type="journal article" date="2004" name="DNA Res.">
        <title>Complete genome sequence of Yersinia pestis strain 91001, an isolate avirulent to humans.</title>
        <authorList>
            <person name="Song Y."/>
            <person name="Tong Z."/>
            <person name="Wang J."/>
            <person name="Wang L."/>
            <person name="Guo Z."/>
            <person name="Han Y."/>
            <person name="Zhang J."/>
            <person name="Pei D."/>
            <person name="Zhou D."/>
            <person name="Qin H."/>
            <person name="Pang X."/>
            <person name="Han Y."/>
            <person name="Zhai J."/>
            <person name="Li M."/>
            <person name="Cui B."/>
            <person name="Qi Z."/>
            <person name="Jin L."/>
            <person name="Dai R."/>
            <person name="Chen F."/>
            <person name="Li S."/>
            <person name="Ye C."/>
            <person name="Du Z."/>
            <person name="Lin W."/>
            <person name="Wang J."/>
            <person name="Yu J."/>
            <person name="Yang H."/>
            <person name="Wang J."/>
            <person name="Huang P."/>
            <person name="Yang R."/>
        </authorList>
    </citation>
    <scope>NUCLEOTIDE SEQUENCE [LARGE SCALE GENOMIC DNA]</scope>
    <source>
        <strain>91001 / Biovar Mediaevalis</strain>
    </source>
</reference>
<keyword id="KW-0614">Plasmid</keyword>
<keyword id="KW-1185">Reference proteome</keyword>
<feature type="chain" id="PRO_0000084376" description="Low calcium response locus protein S">
    <location>
        <begin position="1"/>
        <end position="88"/>
    </location>
</feature>
<dbReference type="EMBL" id="AF074612">
    <property type="protein sequence ID" value="AAC69827.1"/>
    <property type="molecule type" value="Genomic_DNA"/>
</dbReference>
<dbReference type="EMBL" id="AF053946">
    <property type="protein sequence ID" value="AAC62579.1"/>
    <property type="molecule type" value="Genomic_DNA"/>
</dbReference>
<dbReference type="EMBL" id="AL117189">
    <property type="protein sequence ID" value="CAB54940.1"/>
    <property type="molecule type" value="Genomic_DNA"/>
</dbReference>
<dbReference type="EMBL" id="AE017043">
    <property type="protein sequence ID" value="AAS58539.1"/>
    <property type="molecule type" value="Genomic_DNA"/>
</dbReference>
<dbReference type="PIR" id="T43562">
    <property type="entry name" value="T43562"/>
</dbReference>
<dbReference type="RefSeq" id="NP_395197.1">
    <property type="nucleotide sequence ID" value="NC_003131.1"/>
</dbReference>
<dbReference type="RefSeq" id="NP_857719.1">
    <property type="nucleotide sequence ID" value="NC_004836.1"/>
</dbReference>
<dbReference type="RefSeq" id="NP_857914.1">
    <property type="nucleotide sequence ID" value="NC_004839.1"/>
</dbReference>
<dbReference type="SMR" id="P69961"/>
<dbReference type="IntAct" id="P69961">
    <property type="interactions" value="4"/>
</dbReference>
<dbReference type="PaxDb" id="214092-5832483"/>
<dbReference type="EnsemblBacteria" id="AAS58539">
    <property type="protein sequence ID" value="AAS58539"/>
    <property type="gene ID" value="YP_pCD20"/>
</dbReference>
<dbReference type="KEGG" id="ype:YPCD1.63"/>
<dbReference type="KEGG" id="ypm:YP_pCD20"/>
<dbReference type="PATRIC" id="fig|214092.21.peg.73"/>
<dbReference type="eggNOG" id="COG2963">
    <property type="taxonomic scope" value="Bacteria"/>
</dbReference>
<dbReference type="HOGENOM" id="CLU_027402_34_1_6"/>
<dbReference type="OMA" id="MKEHEAG"/>
<dbReference type="Proteomes" id="UP000000815">
    <property type="component" value="Plasmid pCD1"/>
</dbReference>
<dbReference type="Proteomes" id="UP000001019">
    <property type="component" value="Plasmid pCD1"/>
</dbReference>
<dbReference type="GO" id="GO:0003677">
    <property type="term" value="F:DNA binding"/>
    <property type="evidence" value="ECO:0007669"/>
    <property type="project" value="InterPro"/>
</dbReference>
<dbReference type="GO" id="GO:0004803">
    <property type="term" value="F:transposase activity"/>
    <property type="evidence" value="ECO:0007669"/>
    <property type="project" value="InterPro"/>
</dbReference>
<dbReference type="GO" id="GO:0006313">
    <property type="term" value="P:DNA transposition"/>
    <property type="evidence" value="ECO:0007669"/>
    <property type="project" value="InterPro"/>
</dbReference>
<dbReference type="InterPro" id="IPR009057">
    <property type="entry name" value="Homeodomain-like_sf"/>
</dbReference>
<dbReference type="InterPro" id="IPR002514">
    <property type="entry name" value="Transposase_8"/>
</dbReference>
<dbReference type="InterPro" id="IPR052546">
    <property type="entry name" value="Transposase_8_domain"/>
</dbReference>
<dbReference type="PANTHER" id="PTHR33609">
    <property type="entry name" value="LOW CALCIUM RESPONSE LOCUS PROTEIN S"/>
    <property type="match status" value="1"/>
</dbReference>
<dbReference type="PANTHER" id="PTHR33609:SF5">
    <property type="entry name" value="LOW CALCIUM RESPONSE LOCUS PROTEIN S"/>
    <property type="match status" value="1"/>
</dbReference>
<dbReference type="Pfam" id="PF01527">
    <property type="entry name" value="HTH_Tnp_1"/>
    <property type="match status" value="1"/>
</dbReference>
<dbReference type="SUPFAM" id="SSF46689">
    <property type="entry name" value="Homeodomain-like"/>
    <property type="match status" value="1"/>
</dbReference>
<organism>
    <name type="scientific">Yersinia pestis</name>
    <dbReference type="NCBI Taxonomy" id="632"/>
    <lineage>
        <taxon>Bacteria</taxon>
        <taxon>Pseudomonadati</taxon>
        <taxon>Pseudomonadota</taxon>
        <taxon>Gammaproteobacteria</taxon>
        <taxon>Enterobacterales</taxon>
        <taxon>Yersiniaceae</taxon>
        <taxon>Yersinia</taxon>
    </lineage>
</organism>
<comment type="similarity">
    <text evidence="1">Belongs to the transposase 8 family.</text>
</comment>
<proteinExistence type="inferred from homology"/>
<accession>P69961</accession>
<accession>Q00931</accession>
<accession>Q663H6</accession>
<sequence>MKKARFTETQILRVLKEVEGGRHVKDVCRENGGSEASYYNWKSKYGGMESSDIKRMKEREEENRRLKQMYASLSLDHEILKDVVAKKL</sequence>
<protein>
    <recommendedName>
        <fullName>Low calcium response locus protein S</fullName>
    </recommendedName>
</protein>
<gene>
    <name type="primary">lcrS</name>
    <name type="ordered locus">YPCD1.63</name>
    <name type="ordered locus">y5015</name>
    <name type="ordered locus">y0018</name>
    <name type="ordered locus">YP_pCD20</name>
</gene>